<dbReference type="EC" id="6.2.1.54" evidence="1"/>
<dbReference type="EMBL" id="BA000034">
    <property type="protein sequence ID" value="BAC63959.1"/>
    <property type="status" value="ALT_INIT"/>
    <property type="molecule type" value="Genomic_DNA"/>
</dbReference>
<dbReference type="RefSeq" id="WP_011054604.1">
    <property type="nucleotide sequence ID" value="NC_004606.1"/>
</dbReference>
<dbReference type="SMR" id="P0DA65"/>
<dbReference type="KEGG" id="sps:SPs0864"/>
<dbReference type="HOGENOM" id="CLU_000022_2_12_9"/>
<dbReference type="UniPathway" id="UPA00556"/>
<dbReference type="GO" id="GO:0005737">
    <property type="term" value="C:cytoplasm"/>
    <property type="evidence" value="ECO:0007669"/>
    <property type="project" value="UniProtKB-SubCell"/>
</dbReference>
<dbReference type="GO" id="GO:0005524">
    <property type="term" value="F:ATP binding"/>
    <property type="evidence" value="ECO:0007669"/>
    <property type="project" value="UniProtKB-KW"/>
</dbReference>
<dbReference type="GO" id="GO:0047473">
    <property type="term" value="F:D-alanine [D-alanyl carrier protein] ligase activity"/>
    <property type="evidence" value="ECO:0007669"/>
    <property type="project" value="UniProtKB-UniRule"/>
</dbReference>
<dbReference type="GO" id="GO:0070395">
    <property type="term" value="P:lipoteichoic acid biosynthetic process"/>
    <property type="evidence" value="ECO:0007669"/>
    <property type="project" value="UniProtKB-UniRule"/>
</dbReference>
<dbReference type="CDD" id="cd05945">
    <property type="entry name" value="DltA"/>
    <property type="match status" value="1"/>
</dbReference>
<dbReference type="FunFam" id="3.30.300.30:FF:000012">
    <property type="entry name" value="D-alanine--D-alanyl carrier protein ligase"/>
    <property type="match status" value="1"/>
</dbReference>
<dbReference type="Gene3D" id="3.30.300.30">
    <property type="match status" value="1"/>
</dbReference>
<dbReference type="Gene3D" id="3.40.50.12780">
    <property type="entry name" value="N-terminal domain of ligase-like"/>
    <property type="match status" value="1"/>
</dbReference>
<dbReference type="HAMAP" id="MF_00593">
    <property type="entry name" value="DltA"/>
    <property type="match status" value="1"/>
</dbReference>
<dbReference type="InterPro" id="IPR010071">
    <property type="entry name" value="AA_adenyl_dom"/>
</dbReference>
<dbReference type="InterPro" id="IPR025110">
    <property type="entry name" value="AMP-bd_C"/>
</dbReference>
<dbReference type="InterPro" id="IPR045851">
    <property type="entry name" value="AMP-bd_C_sf"/>
</dbReference>
<dbReference type="InterPro" id="IPR020845">
    <property type="entry name" value="AMP-binding_CS"/>
</dbReference>
<dbReference type="InterPro" id="IPR000873">
    <property type="entry name" value="AMP-dep_synth/lig_dom"/>
</dbReference>
<dbReference type="InterPro" id="IPR042099">
    <property type="entry name" value="ANL_N_sf"/>
</dbReference>
<dbReference type="InterPro" id="IPR010072">
    <property type="entry name" value="DltA"/>
</dbReference>
<dbReference type="InterPro" id="IPR044507">
    <property type="entry name" value="DltA-like"/>
</dbReference>
<dbReference type="NCBIfam" id="TIGR01733">
    <property type="entry name" value="AA-adenyl-dom"/>
    <property type="match status" value="1"/>
</dbReference>
<dbReference type="NCBIfam" id="TIGR01734">
    <property type="entry name" value="D-ala-DACP-lig"/>
    <property type="match status" value="1"/>
</dbReference>
<dbReference type="NCBIfam" id="NF003417">
    <property type="entry name" value="PRK04813.1"/>
    <property type="match status" value="1"/>
</dbReference>
<dbReference type="PANTHER" id="PTHR45398">
    <property type="match status" value="1"/>
</dbReference>
<dbReference type="PANTHER" id="PTHR45398:SF1">
    <property type="entry name" value="ENZYME, PUTATIVE (JCVI)-RELATED"/>
    <property type="match status" value="1"/>
</dbReference>
<dbReference type="Pfam" id="PF00501">
    <property type="entry name" value="AMP-binding"/>
    <property type="match status" value="1"/>
</dbReference>
<dbReference type="Pfam" id="PF13193">
    <property type="entry name" value="AMP-binding_C"/>
    <property type="match status" value="1"/>
</dbReference>
<dbReference type="SUPFAM" id="SSF56801">
    <property type="entry name" value="Acetyl-CoA synthetase-like"/>
    <property type="match status" value="1"/>
</dbReference>
<dbReference type="PROSITE" id="PS00455">
    <property type="entry name" value="AMP_BINDING"/>
    <property type="match status" value="1"/>
</dbReference>
<proteinExistence type="inferred from homology"/>
<protein>
    <recommendedName>
        <fullName evidence="1">D-alanine--D-alanyl carrier protein ligase</fullName>
        <shortName evidence="1">DCL</shortName>
        <ecNumber evidence="1">6.2.1.54</ecNumber>
    </recommendedName>
    <alternativeName>
        <fullName evidence="1">D-alanine--poly(phosphoribitol) ligase subunit 1</fullName>
    </alternativeName>
    <alternativeName>
        <fullName evidence="1">D-alanine-activating enzyme</fullName>
        <shortName evidence="1">DAE</shortName>
    </alternativeName>
</protein>
<reference key="1">
    <citation type="journal article" date="2003" name="Genome Res.">
        <title>Genome sequence of an M3 strain of Streptococcus pyogenes reveals a large-scale genomic rearrangement in invasive strains and new insights into phage evolution.</title>
        <authorList>
            <person name="Nakagawa I."/>
            <person name="Kurokawa K."/>
            <person name="Yamashita A."/>
            <person name="Nakata M."/>
            <person name="Tomiyasu Y."/>
            <person name="Okahashi N."/>
            <person name="Kawabata S."/>
            <person name="Yamazaki K."/>
            <person name="Shiba T."/>
            <person name="Yasunaga T."/>
            <person name="Hayashi H."/>
            <person name="Hattori M."/>
            <person name="Hamada S."/>
        </authorList>
    </citation>
    <scope>NUCLEOTIDE SEQUENCE [LARGE SCALE GENOMIC DNA]</scope>
    <source>
        <strain>SSI-1</strain>
    </source>
</reference>
<comment type="function">
    <text evidence="1">Catalyzes the first step in the D-alanylation of lipoteichoic acid (LTA), the activation of D-alanine and its transfer onto the D-alanyl carrier protein (Dcp) DltC. In an ATP-dependent two-step reaction, forms a high energy D-alanyl-AMP intermediate, followed by transfer of the D-alanyl residue as a thiol ester to the phosphopantheinyl prosthetic group of the Dcp. D-alanylation of LTA plays an important role in modulating the properties of the cell wall in Gram-positive bacteria, influencing the net charge of the cell wall.</text>
</comment>
<comment type="catalytic activity">
    <reaction evidence="1">
        <text>holo-[D-alanyl-carrier protein] + D-alanine + ATP = D-alanyl-[D-alanyl-carrier protein] + AMP + diphosphate</text>
        <dbReference type="Rhea" id="RHEA:55132"/>
        <dbReference type="Rhea" id="RHEA-COMP:14102"/>
        <dbReference type="Rhea" id="RHEA-COMP:14103"/>
        <dbReference type="ChEBI" id="CHEBI:30616"/>
        <dbReference type="ChEBI" id="CHEBI:33019"/>
        <dbReference type="ChEBI" id="CHEBI:57416"/>
        <dbReference type="ChEBI" id="CHEBI:64479"/>
        <dbReference type="ChEBI" id="CHEBI:138620"/>
        <dbReference type="ChEBI" id="CHEBI:456215"/>
        <dbReference type="EC" id="6.2.1.54"/>
    </reaction>
</comment>
<comment type="pathway">
    <text evidence="1">Cell wall biogenesis; lipoteichoic acid biosynthesis.</text>
</comment>
<comment type="subcellular location">
    <subcellularLocation>
        <location evidence="1">Cytoplasm</location>
    </subcellularLocation>
</comment>
<comment type="similarity">
    <text evidence="1">Belongs to the ATP-dependent AMP-binding enzyme family. DltA subfamily.</text>
</comment>
<comment type="sequence caution" evidence="2">
    <conflict type="erroneous initiation">
        <sequence resource="EMBL-CDS" id="BAC63959"/>
    </conflict>
</comment>
<gene>
    <name evidence="1" type="primary">dltA</name>
    <name type="ordered locus">SPs0864</name>
</gene>
<accession>P0DA65</accession>
<accession>Q8K744</accession>
<keyword id="KW-0067">ATP-binding</keyword>
<keyword id="KW-0963">Cytoplasm</keyword>
<keyword id="KW-0436">Ligase</keyword>
<keyword id="KW-0547">Nucleotide-binding</keyword>
<evidence type="ECO:0000255" key="1">
    <source>
        <dbReference type="HAMAP-Rule" id="MF_00593"/>
    </source>
</evidence>
<evidence type="ECO:0000305" key="2"/>
<sequence length="512" mass="56953">MIKDMIDSIEQFAQTQADFPVYDCLGERRTYGQLKRDSDSIAALIDSLALLAKSPVLVFGAQTYDMLATFVALTKSGHAYIPVDVHSAPERILAIIEIAKPSLIIAIEEFPLTIEGISLVSLSEIESAKLAEMPYERTHSVKGDDNYYIIFTSGTTGQPKGVQISHDNLLSFTNWMIEDAAFDVPKQPQMLAQPPYSFDLSVMYWAPTLALGGTLFALPKELVADFKQLFTTIAQLPVGIWTSTPSFADMAMLSDDFCQAKMPALTHFYFDGEELTVSTARKLFERFPSAKIINAYGPTEATVALSAIEITREMVDNYTRLPIGYPKPDSPTYIIDEDGKELSSGEQGEIIVTGPAVSKGYLNNPEKTAEAFFTFKGQPAYHTGDIGSLTEDNILLYGGRLDFQIKYAGYRIELEDVSQQLNQSPMVASAVAVPRYNKEHKVQNLLAYIVVKDGVKERFDRELELTKAIKASVKDHMMSYMMPSKFLYRDSLPLTPNGKIDIKTLINEVNNR</sequence>
<feature type="chain" id="PRO_0000411320" description="D-alanine--D-alanyl carrier protein ligase">
    <location>
        <begin position="1"/>
        <end position="512"/>
    </location>
</feature>
<feature type="binding site" evidence="1">
    <location>
        <begin position="152"/>
        <end position="153"/>
    </location>
    <ligand>
        <name>ATP</name>
        <dbReference type="ChEBI" id="CHEBI:30616"/>
    </ligand>
</feature>
<feature type="binding site" evidence="1">
    <location>
        <position position="199"/>
    </location>
    <ligand>
        <name>D-alanine</name>
        <dbReference type="ChEBI" id="CHEBI:57416"/>
    </ligand>
</feature>
<feature type="binding site" evidence="1">
    <location>
        <begin position="294"/>
        <end position="299"/>
    </location>
    <ligand>
        <name>ATP</name>
        <dbReference type="ChEBI" id="CHEBI:30616"/>
    </ligand>
</feature>
<feature type="binding site" evidence="1">
    <location>
        <position position="303"/>
    </location>
    <ligand>
        <name>D-alanine</name>
        <dbReference type="ChEBI" id="CHEBI:57416"/>
    </ligand>
</feature>
<feature type="binding site" evidence="1">
    <location>
        <position position="385"/>
    </location>
    <ligand>
        <name>ATP</name>
        <dbReference type="ChEBI" id="CHEBI:30616"/>
    </ligand>
</feature>
<feature type="binding site" evidence="1">
    <location>
        <begin position="397"/>
        <end position="400"/>
    </location>
    <ligand>
        <name>ATP</name>
        <dbReference type="ChEBI" id="CHEBI:30616"/>
    </ligand>
</feature>
<feature type="binding site" evidence="1">
    <location>
        <position position="499"/>
    </location>
    <ligand>
        <name>ATP</name>
        <dbReference type="ChEBI" id="CHEBI:30616"/>
    </ligand>
</feature>
<feature type="binding site" evidence="1">
    <location>
        <position position="499"/>
    </location>
    <ligand>
        <name>D-alanine</name>
        <dbReference type="ChEBI" id="CHEBI:57416"/>
    </ligand>
</feature>
<name>DLTA_STRPQ</name>
<organism>
    <name type="scientific">Streptococcus pyogenes serotype M3 (strain SSI-1)</name>
    <dbReference type="NCBI Taxonomy" id="193567"/>
    <lineage>
        <taxon>Bacteria</taxon>
        <taxon>Bacillati</taxon>
        <taxon>Bacillota</taxon>
        <taxon>Bacilli</taxon>
        <taxon>Lactobacillales</taxon>
        <taxon>Streptococcaceae</taxon>
        <taxon>Streptococcus</taxon>
    </lineage>
</organism>